<comment type="function">
    <text evidence="1">Catalyzes the attachment of tyrosine to tRNA(Tyr) in a two-step reaction: tyrosine is first activated by ATP to form Tyr-AMP and then transferred to the acceptor end of tRNA(Tyr).</text>
</comment>
<comment type="catalytic activity">
    <reaction evidence="1">
        <text>tRNA(Tyr) + L-tyrosine + ATP = L-tyrosyl-tRNA(Tyr) + AMP + diphosphate + H(+)</text>
        <dbReference type="Rhea" id="RHEA:10220"/>
        <dbReference type="Rhea" id="RHEA-COMP:9706"/>
        <dbReference type="Rhea" id="RHEA-COMP:9707"/>
        <dbReference type="ChEBI" id="CHEBI:15378"/>
        <dbReference type="ChEBI" id="CHEBI:30616"/>
        <dbReference type="ChEBI" id="CHEBI:33019"/>
        <dbReference type="ChEBI" id="CHEBI:58315"/>
        <dbReference type="ChEBI" id="CHEBI:78442"/>
        <dbReference type="ChEBI" id="CHEBI:78536"/>
        <dbReference type="ChEBI" id="CHEBI:456215"/>
        <dbReference type="EC" id="6.1.1.1"/>
    </reaction>
</comment>
<comment type="subunit">
    <text evidence="1">Homodimer.</text>
</comment>
<comment type="subcellular location">
    <subcellularLocation>
        <location evidence="1">Cytoplasm</location>
    </subcellularLocation>
</comment>
<comment type="similarity">
    <text evidence="1">Belongs to the class-I aminoacyl-tRNA synthetase family. TyrS type 2 subfamily.</text>
</comment>
<comment type="sequence caution" evidence="2">
    <conflict type="erroneous initiation">
        <sequence resource="EMBL-CDS" id="AAU26662"/>
    </conflict>
</comment>
<accession>Q5ZY07</accession>
<organism>
    <name type="scientific">Legionella pneumophila subsp. pneumophila (strain Philadelphia 1 / ATCC 33152 / DSM 7513)</name>
    <dbReference type="NCBI Taxonomy" id="272624"/>
    <lineage>
        <taxon>Bacteria</taxon>
        <taxon>Pseudomonadati</taxon>
        <taxon>Pseudomonadota</taxon>
        <taxon>Gammaproteobacteria</taxon>
        <taxon>Legionellales</taxon>
        <taxon>Legionellaceae</taxon>
        <taxon>Legionella</taxon>
    </lineage>
</organism>
<gene>
    <name evidence="1" type="primary">tyrS</name>
    <name type="ordered locus">lpg0568</name>
</gene>
<protein>
    <recommendedName>
        <fullName evidence="1">Tyrosine--tRNA ligase</fullName>
        <ecNumber evidence="1">6.1.1.1</ecNumber>
    </recommendedName>
    <alternativeName>
        <fullName evidence="1">Tyrosyl-tRNA synthetase</fullName>
        <shortName evidence="1">TyrRS</shortName>
    </alternativeName>
</protein>
<reference key="1">
    <citation type="journal article" date="2004" name="Science">
        <title>The genomic sequence of the accidental pathogen Legionella pneumophila.</title>
        <authorList>
            <person name="Chien M."/>
            <person name="Morozova I."/>
            <person name="Shi S."/>
            <person name="Sheng H."/>
            <person name="Chen J."/>
            <person name="Gomez S.M."/>
            <person name="Asamani G."/>
            <person name="Hill K."/>
            <person name="Nuara J."/>
            <person name="Feder M."/>
            <person name="Rineer J."/>
            <person name="Greenberg J.J."/>
            <person name="Steshenko V."/>
            <person name="Park S.H."/>
            <person name="Zhao B."/>
            <person name="Teplitskaya E."/>
            <person name="Edwards J.R."/>
            <person name="Pampou S."/>
            <person name="Georghiou A."/>
            <person name="Chou I.-C."/>
            <person name="Iannuccilli W."/>
            <person name="Ulz M.E."/>
            <person name="Kim D.H."/>
            <person name="Geringer-Sameth A."/>
            <person name="Goldsberry C."/>
            <person name="Morozov P."/>
            <person name="Fischer S.G."/>
            <person name="Segal G."/>
            <person name="Qu X."/>
            <person name="Rzhetsky A."/>
            <person name="Zhang P."/>
            <person name="Cayanis E."/>
            <person name="De Jong P.J."/>
            <person name="Ju J."/>
            <person name="Kalachikov S."/>
            <person name="Shuman H.A."/>
            <person name="Russo J.J."/>
        </authorList>
    </citation>
    <scope>NUCLEOTIDE SEQUENCE [LARGE SCALE GENOMIC DNA]</scope>
    <source>
        <strain>Philadelphia 1 / ATCC 33152 / DSM 7513</strain>
    </source>
</reference>
<keyword id="KW-0030">Aminoacyl-tRNA synthetase</keyword>
<keyword id="KW-0067">ATP-binding</keyword>
<keyword id="KW-0963">Cytoplasm</keyword>
<keyword id="KW-0436">Ligase</keyword>
<keyword id="KW-0547">Nucleotide-binding</keyword>
<keyword id="KW-0648">Protein biosynthesis</keyword>
<keyword id="KW-1185">Reference proteome</keyword>
<keyword id="KW-0694">RNA-binding</keyword>
<sequence>MIVQDSVCSELMRGCEEILPVPELEKKLQKGIPLKIKAGFDPTAPDLHLGHTVLLNKLRQFQQFGHEVIFLIGDFTAMIGDPTGKNVTRMPLSQETVLENAKTYQHQVFKILDPDKTTVAFNSQWLNKFNAVDLIRLAATHTVARMLERDDFNKRYTTGQPIAIHEFLYPLLQGYDSVALKADVELGGTDQKFNLLMGRELQKHYGFEPQVVMMTPLIEGLDGVKKMSKSLDNYIGINETPEQMFGKIMSVSDELMWRYIDLLSFKTGKEIQQLKQSVLEGKNPRDVKIDFAKEIVARFHDQTQAEFAHNKFIERFQKGNIPEDLEELSLVIAEPIALAQLLKQIDLTASTSESIRMVKQGAVKVDGDKISDPSLKLPIGKSYIIQVGKRRIAKLSIQQAD</sequence>
<dbReference type="EC" id="6.1.1.1" evidence="1"/>
<dbReference type="EMBL" id="AE017354">
    <property type="protein sequence ID" value="AAU26662.1"/>
    <property type="status" value="ALT_INIT"/>
    <property type="molecule type" value="Genomic_DNA"/>
</dbReference>
<dbReference type="RefSeq" id="WP_015444785.1">
    <property type="nucleotide sequence ID" value="NC_002942.5"/>
</dbReference>
<dbReference type="RefSeq" id="YP_094609.1">
    <property type="nucleotide sequence ID" value="NC_002942.5"/>
</dbReference>
<dbReference type="SMR" id="Q5ZY07"/>
<dbReference type="STRING" id="272624.lpg0568"/>
<dbReference type="PaxDb" id="272624-lpg0568"/>
<dbReference type="GeneID" id="57034567"/>
<dbReference type="KEGG" id="lpn:lpg0568"/>
<dbReference type="PATRIC" id="fig|272624.6.peg.589"/>
<dbReference type="eggNOG" id="COG0162">
    <property type="taxonomic scope" value="Bacteria"/>
</dbReference>
<dbReference type="HOGENOM" id="CLU_024003_5_0_6"/>
<dbReference type="OrthoDB" id="9804243at2"/>
<dbReference type="Proteomes" id="UP000000609">
    <property type="component" value="Chromosome"/>
</dbReference>
<dbReference type="GO" id="GO:0005829">
    <property type="term" value="C:cytosol"/>
    <property type="evidence" value="ECO:0007669"/>
    <property type="project" value="TreeGrafter"/>
</dbReference>
<dbReference type="GO" id="GO:0005524">
    <property type="term" value="F:ATP binding"/>
    <property type="evidence" value="ECO:0007669"/>
    <property type="project" value="UniProtKB-UniRule"/>
</dbReference>
<dbReference type="GO" id="GO:0003723">
    <property type="term" value="F:RNA binding"/>
    <property type="evidence" value="ECO:0007669"/>
    <property type="project" value="UniProtKB-KW"/>
</dbReference>
<dbReference type="GO" id="GO:0004831">
    <property type="term" value="F:tyrosine-tRNA ligase activity"/>
    <property type="evidence" value="ECO:0007669"/>
    <property type="project" value="UniProtKB-UniRule"/>
</dbReference>
<dbReference type="GO" id="GO:0006437">
    <property type="term" value="P:tyrosyl-tRNA aminoacylation"/>
    <property type="evidence" value="ECO:0007669"/>
    <property type="project" value="UniProtKB-UniRule"/>
</dbReference>
<dbReference type="CDD" id="cd00165">
    <property type="entry name" value="S4"/>
    <property type="match status" value="1"/>
</dbReference>
<dbReference type="CDD" id="cd00805">
    <property type="entry name" value="TyrRS_core"/>
    <property type="match status" value="1"/>
</dbReference>
<dbReference type="FunFam" id="1.10.240.10:FF:000006">
    <property type="entry name" value="Tyrosine--tRNA ligase"/>
    <property type="match status" value="1"/>
</dbReference>
<dbReference type="FunFam" id="3.40.50.620:FF:000061">
    <property type="entry name" value="Tyrosine--tRNA ligase"/>
    <property type="match status" value="1"/>
</dbReference>
<dbReference type="Gene3D" id="3.40.50.620">
    <property type="entry name" value="HUPs"/>
    <property type="match status" value="1"/>
</dbReference>
<dbReference type="Gene3D" id="3.10.290.10">
    <property type="entry name" value="RNA-binding S4 domain"/>
    <property type="match status" value="1"/>
</dbReference>
<dbReference type="Gene3D" id="1.10.240.10">
    <property type="entry name" value="Tyrosyl-Transfer RNA Synthetase"/>
    <property type="match status" value="1"/>
</dbReference>
<dbReference type="HAMAP" id="MF_02007">
    <property type="entry name" value="Tyr_tRNA_synth_type2"/>
    <property type="match status" value="1"/>
</dbReference>
<dbReference type="InterPro" id="IPR001412">
    <property type="entry name" value="aa-tRNA-synth_I_CS"/>
</dbReference>
<dbReference type="InterPro" id="IPR002305">
    <property type="entry name" value="aa-tRNA-synth_Ic"/>
</dbReference>
<dbReference type="InterPro" id="IPR014729">
    <property type="entry name" value="Rossmann-like_a/b/a_fold"/>
</dbReference>
<dbReference type="InterPro" id="IPR002942">
    <property type="entry name" value="S4_RNA-bd"/>
</dbReference>
<dbReference type="InterPro" id="IPR036986">
    <property type="entry name" value="S4_RNA-bd_sf"/>
</dbReference>
<dbReference type="InterPro" id="IPR002307">
    <property type="entry name" value="Tyr-tRNA-ligase"/>
</dbReference>
<dbReference type="InterPro" id="IPR024088">
    <property type="entry name" value="Tyr-tRNA-ligase_bac-type"/>
</dbReference>
<dbReference type="InterPro" id="IPR024108">
    <property type="entry name" value="Tyr-tRNA-ligase_bac_2"/>
</dbReference>
<dbReference type="NCBIfam" id="TIGR00234">
    <property type="entry name" value="tyrS"/>
    <property type="match status" value="1"/>
</dbReference>
<dbReference type="PANTHER" id="PTHR11766:SF1">
    <property type="entry name" value="TYROSINE--TRNA LIGASE"/>
    <property type="match status" value="1"/>
</dbReference>
<dbReference type="PANTHER" id="PTHR11766">
    <property type="entry name" value="TYROSYL-TRNA SYNTHETASE"/>
    <property type="match status" value="1"/>
</dbReference>
<dbReference type="Pfam" id="PF00579">
    <property type="entry name" value="tRNA-synt_1b"/>
    <property type="match status" value="1"/>
</dbReference>
<dbReference type="PRINTS" id="PR01040">
    <property type="entry name" value="TRNASYNTHTYR"/>
</dbReference>
<dbReference type="SMART" id="SM00363">
    <property type="entry name" value="S4"/>
    <property type="match status" value="1"/>
</dbReference>
<dbReference type="SUPFAM" id="SSF55174">
    <property type="entry name" value="Alpha-L RNA-binding motif"/>
    <property type="match status" value="1"/>
</dbReference>
<dbReference type="SUPFAM" id="SSF52374">
    <property type="entry name" value="Nucleotidylyl transferase"/>
    <property type="match status" value="1"/>
</dbReference>
<dbReference type="PROSITE" id="PS00178">
    <property type="entry name" value="AA_TRNA_LIGASE_I"/>
    <property type="match status" value="1"/>
</dbReference>
<dbReference type="PROSITE" id="PS50889">
    <property type="entry name" value="S4"/>
    <property type="match status" value="1"/>
</dbReference>
<name>SYY_LEGPH</name>
<proteinExistence type="inferred from homology"/>
<evidence type="ECO:0000255" key="1">
    <source>
        <dbReference type="HAMAP-Rule" id="MF_02007"/>
    </source>
</evidence>
<evidence type="ECO:0000305" key="2"/>
<feature type="chain" id="PRO_0000236730" description="Tyrosine--tRNA ligase">
    <location>
        <begin position="1"/>
        <end position="401"/>
    </location>
</feature>
<feature type="domain" description="S4 RNA-binding" evidence="1">
    <location>
        <begin position="336"/>
        <end position="397"/>
    </location>
</feature>
<feature type="short sequence motif" description="'HIGH' region">
    <location>
        <begin position="42"/>
        <end position="51"/>
    </location>
</feature>
<feature type="short sequence motif" description="'KMSKS' region">
    <location>
        <begin position="226"/>
        <end position="230"/>
    </location>
</feature>
<feature type="binding site" evidence="1">
    <location>
        <position position="229"/>
    </location>
    <ligand>
        <name>ATP</name>
        <dbReference type="ChEBI" id="CHEBI:30616"/>
    </ligand>
</feature>